<comment type="function">
    <text evidence="1">Plays a role in maintaining the mitochondrial genome and in controlling the mtDNA escape. Involved in the regulation of mtDNA nucleotide structure and number. May have a dispensable role in early maturation of pre-rRNA (By similarity).</text>
</comment>
<comment type="subcellular location">
    <subcellularLocation>
        <location evidence="1">Mitochondrion inner membrane</location>
        <topology evidence="1">Single-pass membrane protein</topology>
    </subcellularLocation>
</comment>
<comment type="similarity">
    <text evidence="3">Belongs to the YME2 family.</text>
</comment>
<sequence length="877" mass="99336">MISSSRVAAMALRQSSRAIVPLAVLSSNGLRSRYFTPGLAHKTQIRTVTSDIAEIKQEIDKDESDNSAETTGVIDVKNQHEVVLYYDHIYFLGASSPAYFNVFLQFLRIRKQTPAQIRDKILKVSAPIPAEAEITQLIPFMRDCGAFAKFQVPPGVEVAEFVQQIRQNVVHNEKAYNSGIFRRVLSLFWSHYPAVYSVKGTPWIEDLRRYPNTKLKVKFEGEPLTEEELYVLFRRYGPLVDIIPGPESAEATLIYRGLRSAIAAKNCITGVSLNKGRTVLHLQYIPIKRVNYITEFVTNHQRIAIPIILALLATLAVLIFDPIRQYFIEVKITKRYSFDTYKDYAVVKTITKPLRVVHNWLSSSYDYIDKKIDSISSPGTASDEKSDDSDVSQALQTASTIWNERSEKSKQIKMWIYENVNTFIIVKGPKGSGKEEFILDHTLLNDEKLRHKILYINCSELAKARSDNDLLKSTANQLGYFPLFTWTNTVSQFVDLGVQGLTGQKSGLSESKETQLKNMFTLTSQAIRSIATRDYQKYHASVTRKNNRLPEGENIEILKEEEYLQQHPECKPIVVIDKFNRKADAASNDFVYPMIAEWSSVLVQNNLAHVIYVTSDVGSIQHLNNALPNQVFKSISLSDASSFSAKSFLMHQLKLEDDHTISGAFEPLGGRMLDLQAFVRRINSGETPPEALEEMVNQASEQVTTFFLCAHKIDDDTNWNAAQVWMLMKLLSKSDSINYSDLNKSPLFKPEEDTVATLTTLEKHDLISLQRDKGILDKISIGRPLFKAAFKQLISDPKISKLYEVDYISTLIKIENEKIKKFEGELISIQKLGDKLGSRVLYLSKKIDASNAKVVEYEGKIAEINSKPASKNFLKLF</sequence>
<gene>
    <name type="primary">YME2</name>
    <name type="synonym">PRP12</name>
    <name type="ORF">PICST_33874</name>
</gene>
<organism>
    <name type="scientific">Scheffersomyces stipitis (strain ATCC 58785 / CBS 6054 / NBRC 10063 / NRRL Y-11545)</name>
    <name type="common">Yeast</name>
    <name type="synonym">Pichia stipitis</name>
    <dbReference type="NCBI Taxonomy" id="322104"/>
    <lineage>
        <taxon>Eukaryota</taxon>
        <taxon>Fungi</taxon>
        <taxon>Dikarya</taxon>
        <taxon>Ascomycota</taxon>
        <taxon>Saccharomycotina</taxon>
        <taxon>Pichiomycetes</taxon>
        <taxon>Debaryomycetaceae</taxon>
        <taxon>Scheffersomyces</taxon>
    </lineage>
</organism>
<evidence type="ECO:0000250" key="1"/>
<evidence type="ECO:0000255" key="2"/>
<evidence type="ECO:0000305" key="3"/>
<name>YME2_PICST</name>
<proteinExistence type="inferred from homology"/>
<accession>A3M0D8</accession>
<dbReference type="EMBL" id="CP000502">
    <property type="protein sequence ID" value="ABN68505.2"/>
    <property type="molecule type" value="Genomic_DNA"/>
</dbReference>
<dbReference type="RefSeq" id="XP_001386534.2">
    <property type="nucleotide sequence ID" value="XM_001386497.1"/>
</dbReference>
<dbReference type="FunCoup" id="A3M0D8">
    <property type="interactions" value="141"/>
</dbReference>
<dbReference type="STRING" id="322104.A3M0D8"/>
<dbReference type="GeneID" id="4840908"/>
<dbReference type="KEGG" id="pic:PICST_33874"/>
<dbReference type="eggNOG" id="ENOG502QS0P">
    <property type="taxonomic scope" value="Eukaryota"/>
</dbReference>
<dbReference type="HOGENOM" id="CLU_007861_1_0_1"/>
<dbReference type="InParanoid" id="A3M0D8"/>
<dbReference type="OMA" id="WTPEQAW"/>
<dbReference type="OrthoDB" id="10267654at2759"/>
<dbReference type="Proteomes" id="UP000002258">
    <property type="component" value="Chromosome 8"/>
</dbReference>
<dbReference type="GO" id="GO:0005743">
    <property type="term" value="C:mitochondrial inner membrane"/>
    <property type="evidence" value="ECO:0007669"/>
    <property type="project" value="UniProtKB-SubCell"/>
</dbReference>
<dbReference type="GO" id="GO:0003723">
    <property type="term" value="F:RNA binding"/>
    <property type="evidence" value="ECO:0007669"/>
    <property type="project" value="UniProtKB-KW"/>
</dbReference>
<dbReference type="GO" id="GO:0000002">
    <property type="term" value="P:mitochondrial genome maintenance"/>
    <property type="evidence" value="ECO:0007669"/>
    <property type="project" value="EnsemblFungi"/>
</dbReference>
<dbReference type="GO" id="GO:0006397">
    <property type="term" value="P:mRNA processing"/>
    <property type="evidence" value="ECO:0007669"/>
    <property type="project" value="UniProtKB-KW"/>
</dbReference>
<dbReference type="CDD" id="cd12433">
    <property type="entry name" value="RRM_Yme2p_like"/>
    <property type="match status" value="1"/>
</dbReference>
<dbReference type="Gene3D" id="3.40.50.300">
    <property type="entry name" value="P-loop containing nucleotide triphosphate hydrolases"/>
    <property type="match status" value="1"/>
</dbReference>
<dbReference type="InterPro" id="IPR018850">
    <property type="entry name" value="Mt_escape_2_C"/>
</dbReference>
<dbReference type="InterPro" id="IPR027417">
    <property type="entry name" value="P-loop_NTPase"/>
</dbReference>
<dbReference type="InterPro" id="IPR039627">
    <property type="entry name" value="Yme2_C"/>
</dbReference>
<dbReference type="InterPro" id="IPR034260">
    <property type="entry name" value="Yme2_RRM"/>
</dbReference>
<dbReference type="PANTHER" id="PTHR32198">
    <property type="entry name" value="MITOCHONDRIAL ESCAPE PROTEIN 2"/>
    <property type="match status" value="1"/>
</dbReference>
<dbReference type="PANTHER" id="PTHR32198:SF2">
    <property type="entry name" value="MITOCHONDRIAL ESCAPE PROTEIN 2"/>
    <property type="match status" value="1"/>
</dbReference>
<dbReference type="Pfam" id="PF10443">
    <property type="entry name" value="RNA12"/>
    <property type="match status" value="1"/>
</dbReference>
<dbReference type="SUPFAM" id="SSF52540">
    <property type="entry name" value="P-loop containing nucleoside triphosphate hydrolases"/>
    <property type="match status" value="1"/>
</dbReference>
<keyword id="KW-0472">Membrane</keyword>
<keyword id="KW-0496">Mitochondrion</keyword>
<keyword id="KW-0999">Mitochondrion inner membrane</keyword>
<keyword id="KW-0507">mRNA processing</keyword>
<keyword id="KW-1185">Reference proteome</keyword>
<keyword id="KW-0694">RNA-binding</keyword>
<keyword id="KW-0809">Transit peptide</keyword>
<keyword id="KW-0812">Transmembrane</keyword>
<keyword id="KW-1133">Transmembrane helix</keyword>
<feature type="transit peptide" description="Mitochondrion" evidence="2">
    <location>
        <begin position="1"/>
        <end position="47"/>
    </location>
</feature>
<feature type="chain" id="PRO_0000343130" description="Mitochondrial escape protein 2">
    <location>
        <begin position="48"/>
        <end position="877"/>
    </location>
</feature>
<feature type="topological domain" description="Mitochondrial matrix" evidence="2">
    <location>
        <begin position="48"/>
        <end position="302"/>
    </location>
</feature>
<feature type="transmembrane region" description="Helical" evidence="2">
    <location>
        <begin position="303"/>
        <end position="323"/>
    </location>
</feature>
<feature type="topological domain" description="Mitochondrial intermembrane" evidence="2">
    <location>
        <begin position="324"/>
        <end position="877"/>
    </location>
</feature>
<feature type="domain" description="RRM">
    <location>
        <begin position="213"/>
        <end position="286"/>
    </location>
</feature>
<protein>
    <recommendedName>
        <fullName>Mitochondrial escape protein 2</fullName>
    </recommendedName>
</protein>
<reference key="1">
    <citation type="journal article" date="2007" name="Nat. Biotechnol.">
        <title>Genome sequence of the lignocellulose-bioconverting and xylose-fermenting yeast Pichia stipitis.</title>
        <authorList>
            <person name="Jeffries T.W."/>
            <person name="Grigoriev I.V."/>
            <person name="Grimwood J."/>
            <person name="Laplaza J.M."/>
            <person name="Aerts A."/>
            <person name="Salamov A."/>
            <person name="Schmutz J."/>
            <person name="Lindquist E."/>
            <person name="Dehal P."/>
            <person name="Shapiro H."/>
            <person name="Jin Y.-S."/>
            <person name="Passoth V."/>
            <person name="Richardson P.M."/>
        </authorList>
    </citation>
    <scope>NUCLEOTIDE SEQUENCE [LARGE SCALE GENOMIC DNA]</scope>
    <source>
        <strain>ATCC 58785 / CBS 6054 / NBRC 10063 / NRRL Y-11545</strain>
    </source>
</reference>